<proteinExistence type="evidence at protein level"/>
<dbReference type="EMBL" id="X79551">
    <property type="protein sequence ID" value="CAA56094.1"/>
    <property type="molecule type" value="Genomic_DNA"/>
</dbReference>
<dbReference type="EMBL" id="X90765">
    <property type="protein sequence ID" value="CAA62287.1"/>
    <property type="molecule type" value="Genomic_DNA"/>
</dbReference>
<dbReference type="PIR" id="S15441">
    <property type="entry name" value="S15441"/>
</dbReference>
<dbReference type="RefSeq" id="WP_011173705.1">
    <property type="nucleotide sequence ID" value="NZ_LR027517.1"/>
</dbReference>
<dbReference type="PDB" id="1AN7">
    <property type="method" value="X-ray"/>
    <property type="resolution" value="2.90 A"/>
    <property type="chains" value="A/B=3-138"/>
</dbReference>
<dbReference type="PDB" id="4V8X">
    <property type="method" value="X-ray"/>
    <property type="resolution" value="3.35 A"/>
    <property type="chains" value="AH/CH=1-138"/>
</dbReference>
<dbReference type="PDBsum" id="1AN7"/>
<dbReference type="PDBsum" id="4V8X"/>
<dbReference type="SMR" id="P24319"/>
<dbReference type="GeneID" id="3169811"/>
<dbReference type="OMA" id="NSAYHDT"/>
<dbReference type="EvolutionaryTrace" id="P24319"/>
<dbReference type="GO" id="GO:1990904">
    <property type="term" value="C:ribonucleoprotein complex"/>
    <property type="evidence" value="ECO:0007669"/>
    <property type="project" value="UniProtKB-KW"/>
</dbReference>
<dbReference type="GO" id="GO:0005840">
    <property type="term" value="C:ribosome"/>
    <property type="evidence" value="ECO:0007669"/>
    <property type="project" value="UniProtKB-KW"/>
</dbReference>
<dbReference type="GO" id="GO:0019843">
    <property type="term" value="F:rRNA binding"/>
    <property type="evidence" value="ECO:0007669"/>
    <property type="project" value="UniProtKB-UniRule"/>
</dbReference>
<dbReference type="GO" id="GO:0003735">
    <property type="term" value="F:structural constituent of ribosome"/>
    <property type="evidence" value="ECO:0007669"/>
    <property type="project" value="InterPro"/>
</dbReference>
<dbReference type="GO" id="GO:0006412">
    <property type="term" value="P:translation"/>
    <property type="evidence" value="ECO:0007669"/>
    <property type="project" value="UniProtKB-UniRule"/>
</dbReference>
<dbReference type="FunFam" id="3.30.1370.30:FF:000002">
    <property type="entry name" value="30S ribosomal protein S8"/>
    <property type="match status" value="1"/>
</dbReference>
<dbReference type="FunFam" id="3.30.1490.10:FF:000001">
    <property type="entry name" value="30S ribosomal protein S8"/>
    <property type="match status" value="1"/>
</dbReference>
<dbReference type="Gene3D" id="3.30.1370.30">
    <property type="match status" value="1"/>
</dbReference>
<dbReference type="Gene3D" id="3.30.1490.10">
    <property type="match status" value="1"/>
</dbReference>
<dbReference type="HAMAP" id="MF_01302_B">
    <property type="entry name" value="Ribosomal_uS8_B"/>
    <property type="match status" value="1"/>
</dbReference>
<dbReference type="InterPro" id="IPR000630">
    <property type="entry name" value="Ribosomal_uS8"/>
</dbReference>
<dbReference type="InterPro" id="IPR047863">
    <property type="entry name" value="Ribosomal_uS8_CS"/>
</dbReference>
<dbReference type="InterPro" id="IPR035987">
    <property type="entry name" value="Ribosomal_uS8_sf"/>
</dbReference>
<dbReference type="NCBIfam" id="NF001109">
    <property type="entry name" value="PRK00136.1"/>
    <property type="match status" value="1"/>
</dbReference>
<dbReference type="PANTHER" id="PTHR11758">
    <property type="entry name" value="40S RIBOSOMAL PROTEIN S15A"/>
    <property type="match status" value="1"/>
</dbReference>
<dbReference type="Pfam" id="PF00410">
    <property type="entry name" value="Ribosomal_S8"/>
    <property type="match status" value="1"/>
</dbReference>
<dbReference type="SUPFAM" id="SSF56047">
    <property type="entry name" value="Ribosomal protein S8"/>
    <property type="match status" value="1"/>
</dbReference>
<dbReference type="PROSITE" id="PS00053">
    <property type="entry name" value="RIBOSOMAL_S8"/>
    <property type="match status" value="1"/>
</dbReference>
<reference key="1">
    <citation type="journal article" date="1994" name="Eur. J. Biochem.">
        <title>The ribosomal protein S8 from Thermus thermophilus VK1. Sequencing of the gene, overexpression of the protein in Escherichia coli and interaction with rRNA.</title>
        <authorList>
            <person name="Vysotskaya V.S."/>
            <person name="Tischenko S."/>
            <person name="Garber M.B."/>
            <person name="Kern D."/>
            <person name="Ehresmann C."/>
            <person name="Ehresmann B."/>
        </authorList>
    </citation>
    <scope>NUCLEOTIDE SEQUENCE [GENOMIC DNA]</scope>
    <source>
        <strain>VK1</strain>
    </source>
</reference>
<reference key="2">
    <citation type="journal article" date="1997" name="Gene">
        <title>Sequencing and analysis of the Thermus thermophilus ribosomal protein gene cluster equivalent to the spectinomycin operon.</title>
        <authorList>
            <person name="Vysotskaya V.S."/>
            <person name="Shcherbakov D.V."/>
            <person name="Garber M.B."/>
        </authorList>
    </citation>
    <scope>NUCLEOTIDE SEQUENCE [GENOMIC DNA] OF 38-138</scope>
    <source>
        <strain>VK1</strain>
    </source>
</reference>
<reference key="3">
    <citation type="journal article" date="1998" name="J. Mol. Biol.">
        <title>Crystal structure of ribosomal protein S8 from Thermus thermophilus reveals a high degree of structural conservation of a specific RNA binding site.</title>
        <authorList>
            <person name="Nevskaya N."/>
            <person name="Tishchenko S."/>
            <person name="Nikulin A."/>
            <person name="Al-Karadaghi S."/>
            <person name="Liljas A."/>
            <person name="Ehresmann B."/>
            <person name="Ehresmann C."/>
            <person name="Garber M.B."/>
            <person name="Nikonov S."/>
        </authorList>
    </citation>
    <scope>X-RAY CRYSTALLOGRAPHY (2.9 ANGSTROMS)</scope>
    <source>
        <strain>VK1</strain>
    </source>
</reference>
<evidence type="ECO:0000250" key="1"/>
<evidence type="ECO:0000305" key="2"/>
<evidence type="ECO:0007829" key="3">
    <source>
        <dbReference type="PDB" id="1AN7"/>
    </source>
</evidence>
<keyword id="KW-0002">3D-structure</keyword>
<keyword id="KW-0687">Ribonucleoprotein</keyword>
<keyword id="KW-0689">Ribosomal protein</keyword>
<keyword id="KW-0694">RNA-binding</keyword>
<keyword id="KW-0699">rRNA-binding</keyword>
<sequence length="138" mass="15838">MLTDPIADMLTRIRNATRVYKESTDVPASRFKEEILRILAREGFIKGYERVDVDGKPYLRVYLKYGPRRQGPDPRPEQVIHHIRRISKPGRRVYVGVKEIPRVRRGLGIAILSTSKGVLTDREARKLGVGGELICEVW</sequence>
<comment type="function">
    <text evidence="1">One of the primary rRNA binding proteins, it binds directly to 16S rRNA central domain where it helps coordinate assembly of the platform of the 30S subunit.</text>
</comment>
<comment type="subunit">
    <text evidence="1">Part of the 30S ribosomal subunit. Contacts proteins S5 and S12 (By similarity).</text>
</comment>
<comment type="similarity">
    <text evidence="2">Belongs to the universal ribosomal protein uS8 family.</text>
</comment>
<name>RS8_THETH</name>
<accession>P24319</accession>
<accession>P74907</accession>
<organism>
    <name type="scientific">Thermus thermophilus</name>
    <dbReference type="NCBI Taxonomy" id="274"/>
    <lineage>
        <taxon>Bacteria</taxon>
        <taxon>Thermotogati</taxon>
        <taxon>Deinococcota</taxon>
        <taxon>Deinococci</taxon>
        <taxon>Thermales</taxon>
        <taxon>Thermaceae</taxon>
        <taxon>Thermus</taxon>
    </lineage>
</organism>
<feature type="chain" id="PRO_0000126512" description="Small ribosomal subunit protein uS8">
    <location>
        <begin position="1"/>
        <end position="138"/>
    </location>
</feature>
<feature type="sequence conflict" description="In Ref. 2; CAA62287." evidence="2" ref="2">
    <original>K</original>
    <variation>N</variation>
    <location>
        <position position="64"/>
    </location>
</feature>
<feature type="helix" evidence="3">
    <location>
        <begin position="5"/>
        <end position="17"/>
    </location>
</feature>
<feature type="turn" evidence="3">
    <location>
        <begin position="18"/>
        <end position="20"/>
    </location>
</feature>
<feature type="strand" evidence="3">
    <location>
        <begin position="22"/>
        <end position="27"/>
    </location>
</feature>
<feature type="helix" evidence="3">
    <location>
        <begin position="30"/>
        <end position="41"/>
    </location>
</feature>
<feature type="strand" evidence="3">
    <location>
        <begin position="44"/>
        <end position="53"/>
    </location>
</feature>
<feature type="strand" evidence="3">
    <location>
        <begin position="56"/>
        <end position="63"/>
    </location>
</feature>
<feature type="strand" evidence="3">
    <location>
        <begin position="65"/>
        <end position="68"/>
    </location>
</feature>
<feature type="strand" evidence="3">
    <location>
        <begin position="70"/>
        <end position="72"/>
    </location>
</feature>
<feature type="strand" evidence="3">
    <location>
        <begin position="75"/>
        <end position="79"/>
    </location>
</feature>
<feature type="strand" evidence="3">
    <location>
        <begin position="83"/>
        <end position="85"/>
    </location>
</feature>
<feature type="helix" evidence="3">
    <location>
        <begin position="97"/>
        <end position="99"/>
    </location>
</feature>
<feature type="helix" evidence="3">
    <location>
        <begin position="103"/>
        <end position="106"/>
    </location>
</feature>
<feature type="strand" evidence="3">
    <location>
        <begin position="108"/>
        <end position="114"/>
    </location>
</feature>
<feature type="strand" evidence="3">
    <location>
        <begin position="117"/>
        <end position="120"/>
    </location>
</feature>
<feature type="helix" evidence="3">
    <location>
        <begin position="121"/>
        <end position="127"/>
    </location>
</feature>
<feature type="strand" evidence="3">
    <location>
        <begin position="131"/>
        <end position="137"/>
    </location>
</feature>
<protein>
    <recommendedName>
        <fullName evidence="2">Small ribosomal subunit protein uS8</fullName>
    </recommendedName>
    <alternativeName>
        <fullName>30S ribosomal protein S8</fullName>
    </alternativeName>
</protein>
<gene>
    <name type="primary">rpsH</name>
    <name type="synonym">rps8</name>
</gene>